<sequence length="119" mass="13569">MARVKRAVNARKHHRKILKLAKGYYGGKSKLFKTANESVIRALRNAYVGRKLKKRDFRKLWIVRINAAARINGLSYSKFMNGIKTAGININRKMLSEIAINDPKTFTELVQVAKAQLNV</sequence>
<organism>
    <name type="scientific">Clostridium kluyveri (strain NBRC 12016)</name>
    <dbReference type="NCBI Taxonomy" id="583346"/>
    <lineage>
        <taxon>Bacteria</taxon>
        <taxon>Bacillati</taxon>
        <taxon>Bacillota</taxon>
        <taxon>Clostridia</taxon>
        <taxon>Eubacteriales</taxon>
        <taxon>Clostridiaceae</taxon>
        <taxon>Clostridium</taxon>
    </lineage>
</organism>
<proteinExistence type="inferred from homology"/>
<comment type="function">
    <text evidence="1">Binds directly to 23S ribosomal RNA and is necessary for the in vitro assembly process of the 50S ribosomal subunit. It is not involved in the protein synthesizing functions of that subunit.</text>
</comment>
<comment type="similarity">
    <text evidence="1">Belongs to the bacterial ribosomal protein bL20 family.</text>
</comment>
<accession>B9E5V8</accession>
<feature type="chain" id="PRO_1000193951" description="Large ribosomal subunit protein bL20">
    <location>
        <begin position="1"/>
        <end position="119"/>
    </location>
</feature>
<reference key="1">
    <citation type="submission" date="2005-09" db="EMBL/GenBank/DDBJ databases">
        <title>Complete genome sequence of Clostridium kluyveri and comparative genomics of Clostridia species.</title>
        <authorList>
            <person name="Inui M."/>
            <person name="Nonaka H."/>
            <person name="Shinoda Y."/>
            <person name="Ikenaga Y."/>
            <person name="Abe M."/>
            <person name="Naito K."/>
            <person name="Vertes A.A."/>
            <person name="Yukawa H."/>
        </authorList>
    </citation>
    <scope>NUCLEOTIDE SEQUENCE [LARGE SCALE GENOMIC DNA]</scope>
    <source>
        <strain>NBRC 12016</strain>
    </source>
</reference>
<name>RL20_CLOK1</name>
<dbReference type="EMBL" id="AP009049">
    <property type="protein sequence ID" value="BAH07883.1"/>
    <property type="molecule type" value="Genomic_DNA"/>
</dbReference>
<dbReference type="RefSeq" id="WP_012103539.1">
    <property type="nucleotide sequence ID" value="NC_011837.1"/>
</dbReference>
<dbReference type="SMR" id="B9E5V8"/>
<dbReference type="KEGG" id="ckr:CKR_2832"/>
<dbReference type="HOGENOM" id="CLU_123265_0_1_9"/>
<dbReference type="Proteomes" id="UP000007969">
    <property type="component" value="Chromosome"/>
</dbReference>
<dbReference type="GO" id="GO:1990904">
    <property type="term" value="C:ribonucleoprotein complex"/>
    <property type="evidence" value="ECO:0007669"/>
    <property type="project" value="UniProtKB-KW"/>
</dbReference>
<dbReference type="GO" id="GO:0005840">
    <property type="term" value="C:ribosome"/>
    <property type="evidence" value="ECO:0007669"/>
    <property type="project" value="UniProtKB-KW"/>
</dbReference>
<dbReference type="GO" id="GO:0019843">
    <property type="term" value="F:rRNA binding"/>
    <property type="evidence" value="ECO:0007669"/>
    <property type="project" value="UniProtKB-UniRule"/>
</dbReference>
<dbReference type="GO" id="GO:0003735">
    <property type="term" value="F:structural constituent of ribosome"/>
    <property type="evidence" value="ECO:0007669"/>
    <property type="project" value="InterPro"/>
</dbReference>
<dbReference type="GO" id="GO:0000027">
    <property type="term" value="P:ribosomal large subunit assembly"/>
    <property type="evidence" value="ECO:0007669"/>
    <property type="project" value="UniProtKB-UniRule"/>
</dbReference>
<dbReference type="GO" id="GO:0006412">
    <property type="term" value="P:translation"/>
    <property type="evidence" value="ECO:0007669"/>
    <property type="project" value="InterPro"/>
</dbReference>
<dbReference type="CDD" id="cd07026">
    <property type="entry name" value="Ribosomal_L20"/>
    <property type="match status" value="1"/>
</dbReference>
<dbReference type="FunFam" id="1.10.1900.20:FF:000001">
    <property type="entry name" value="50S ribosomal protein L20"/>
    <property type="match status" value="1"/>
</dbReference>
<dbReference type="Gene3D" id="6.10.160.10">
    <property type="match status" value="1"/>
</dbReference>
<dbReference type="Gene3D" id="1.10.1900.20">
    <property type="entry name" value="Ribosomal protein L20"/>
    <property type="match status" value="1"/>
</dbReference>
<dbReference type="HAMAP" id="MF_00382">
    <property type="entry name" value="Ribosomal_bL20"/>
    <property type="match status" value="1"/>
</dbReference>
<dbReference type="InterPro" id="IPR005813">
    <property type="entry name" value="Ribosomal_bL20"/>
</dbReference>
<dbReference type="InterPro" id="IPR049946">
    <property type="entry name" value="RIBOSOMAL_L20_CS"/>
</dbReference>
<dbReference type="InterPro" id="IPR035566">
    <property type="entry name" value="Ribosomal_protein_bL20_C"/>
</dbReference>
<dbReference type="NCBIfam" id="TIGR01032">
    <property type="entry name" value="rplT_bact"/>
    <property type="match status" value="1"/>
</dbReference>
<dbReference type="PANTHER" id="PTHR10986">
    <property type="entry name" value="39S RIBOSOMAL PROTEIN L20"/>
    <property type="match status" value="1"/>
</dbReference>
<dbReference type="Pfam" id="PF00453">
    <property type="entry name" value="Ribosomal_L20"/>
    <property type="match status" value="1"/>
</dbReference>
<dbReference type="PRINTS" id="PR00062">
    <property type="entry name" value="RIBOSOMALL20"/>
</dbReference>
<dbReference type="SUPFAM" id="SSF74731">
    <property type="entry name" value="Ribosomal protein L20"/>
    <property type="match status" value="1"/>
</dbReference>
<dbReference type="PROSITE" id="PS00937">
    <property type="entry name" value="RIBOSOMAL_L20"/>
    <property type="match status" value="1"/>
</dbReference>
<protein>
    <recommendedName>
        <fullName evidence="1">Large ribosomal subunit protein bL20</fullName>
    </recommendedName>
    <alternativeName>
        <fullName evidence="2">50S ribosomal protein L20</fullName>
    </alternativeName>
</protein>
<keyword id="KW-0687">Ribonucleoprotein</keyword>
<keyword id="KW-0689">Ribosomal protein</keyword>
<keyword id="KW-0694">RNA-binding</keyword>
<keyword id="KW-0699">rRNA-binding</keyword>
<evidence type="ECO:0000255" key="1">
    <source>
        <dbReference type="HAMAP-Rule" id="MF_00382"/>
    </source>
</evidence>
<evidence type="ECO:0000305" key="2"/>
<gene>
    <name evidence="1" type="primary">rplT</name>
    <name type="ordered locus">CKR_2832</name>
</gene>